<organism>
    <name type="scientific">Bacteroides thetaiotaomicron (strain ATCC 29148 / DSM 2079 / JCM 5827 / CCUG 10774 / NCTC 10582 / VPI-5482 / E50)</name>
    <dbReference type="NCBI Taxonomy" id="226186"/>
    <lineage>
        <taxon>Bacteria</taxon>
        <taxon>Pseudomonadati</taxon>
        <taxon>Bacteroidota</taxon>
        <taxon>Bacteroidia</taxon>
        <taxon>Bacteroidales</taxon>
        <taxon>Bacteroidaceae</taxon>
        <taxon>Bacteroides</taxon>
    </lineage>
</organism>
<proteinExistence type="inferred from homology"/>
<protein>
    <recommendedName>
        <fullName evidence="1">Cytidylate kinase</fullName>
        <shortName evidence="1">CK</shortName>
        <ecNumber evidence="1">2.7.4.25</ecNumber>
    </recommendedName>
    <alternativeName>
        <fullName evidence="1">Cytidine monophosphate kinase</fullName>
        <shortName evidence="1">CMP kinase</shortName>
    </alternativeName>
</protein>
<reference key="1">
    <citation type="journal article" date="2003" name="Science">
        <title>A genomic view of the human-Bacteroides thetaiotaomicron symbiosis.</title>
        <authorList>
            <person name="Xu J."/>
            <person name="Bjursell M.K."/>
            <person name="Himrod J."/>
            <person name="Deng S."/>
            <person name="Carmichael L.K."/>
            <person name="Chiang H.C."/>
            <person name="Hooper L.V."/>
            <person name="Gordon J.I."/>
        </authorList>
    </citation>
    <scope>NUCLEOTIDE SEQUENCE [LARGE SCALE GENOMIC DNA]</scope>
    <source>
        <strain>ATCC 29148 / DSM 2079 / JCM 5827 / CCUG 10774 / NCTC 10582 / VPI-5482 / E50</strain>
    </source>
</reference>
<accession>Q8A626</accession>
<sequence>MKKITIAIDGFSSCGKSTMAKDLAREVGYIYIDSGAMYRAVTLYSIENGIFNGDVIDTEKLKEAIRDIRITFRPNPETGRPDTYLNGVNVENKIRTMGVSSKVSPISALDFVREAMVAQQQAMGKEKGIVMDGRDIGTTVFPDAELKIFVTATPEIRAQRRFDELKAKGQEGSFEEILENVKQRDYIDQHREVSPLRKADDALLLDNSNLSIEQQKEWLSEQFGKVVKE</sequence>
<gene>
    <name evidence="1" type="primary">cmk</name>
    <name type="ordered locus">BT_2060</name>
</gene>
<keyword id="KW-0067">ATP-binding</keyword>
<keyword id="KW-0963">Cytoplasm</keyword>
<keyword id="KW-0418">Kinase</keyword>
<keyword id="KW-0547">Nucleotide-binding</keyword>
<keyword id="KW-1185">Reference proteome</keyword>
<keyword id="KW-0808">Transferase</keyword>
<comment type="catalytic activity">
    <reaction evidence="1">
        <text>CMP + ATP = CDP + ADP</text>
        <dbReference type="Rhea" id="RHEA:11600"/>
        <dbReference type="ChEBI" id="CHEBI:30616"/>
        <dbReference type="ChEBI" id="CHEBI:58069"/>
        <dbReference type="ChEBI" id="CHEBI:60377"/>
        <dbReference type="ChEBI" id="CHEBI:456216"/>
        <dbReference type="EC" id="2.7.4.25"/>
    </reaction>
</comment>
<comment type="catalytic activity">
    <reaction evidence="1">
        <text>dCMP + ATP = dCDP + ADP</text>
        <dbReference type="Rhea" id="RHEA:25094"/>
        <dbReference type="ChEBI" id="CHEBI:30616"/>
        <dbReference type="ChEBI" id="CHEBI:57566"/>
        <dbReference type="ChEBI" id="CHEBI:58593"/>
        <dbReference type="ChEBI" id="CHEBI:456216"/>
        <dbReference type="EC" id="2.7.4.25"/>
    </reaction>
</comment>
<comment type="subcellular location">
    <subcellularLocation>
        <location evidence="1">Cytoplasm</location>
    </subcellularLocation>
</comment>
<comment type="similarity">
    <text evidence="1">Belongs to the cytidylate kinase family. Type 1 subfamily.</text>
</comment>
<feature type="chain" id="PRO_0000131881" description="Cytidylate kinase">
    <location>
        <begin position="1"/>
        <end position="229"/>
    </location>
</feature>
<feature type="binding site" evidence="1">
    <location>
        <begin position="10"/>
        <end position="18"/>
    </location>
    <ligand>
        <name>ATP</name>
        <dbReference type="ChEBI" id="CHEBI:30616"/>
    </ligand>
</feature>
<name>KCY_BACTN</name>
<evidence type="ECO:0000255" key="1">
    <source>
        <dbReference type="HAMAP-Rule" id="MF_00238"/>
    </source>
</evidence>
<dbReference type="EC" id="2.7.4.25" evidence="1"/>
<dbReference type="EMBL" id="AE015928">
    <property type="protein sequence ID" value="AAO77167.1"/>
    <property type="molecule type" value="Genomic_DNA"/>
</dbReference>
<dbReference type="RefSeq" id="NP_810973.1">
    <property type="nucleotide sequence ID" value="NC_004663.1"/>
</dbReference>
<dbReference type="RefSeq" id="WP_008761050.1">
    <property type="nucleotide sequence ID" value="NZ_UYXG01000005.1"/>
</dbReference>
<dbReference type="SMR" id="Q8A626"/>
<dbReference type="FunCoup" id="Q8A626">
    <property type="interactions" value="329"/>
</dbReference>
<dbReference type="STRING" id="226186.BT_2060"/>
<dbReference type="PaxDb" id="226186-BT_2060"/>
<dbReference type="EnsemblBacteria" id="AAO77167">
    <property type="protein sequence ID" value="AAO77167"/>
    <property type="gene ID" value="BT_2060"/>
</dbReference>
<dbReference type="GeneID" id="60928048"/>
<dbReference type="KEGG" id="bth:BT_2060"/>
<dbReference type="PATRIC" id="fig|226186.12.peg.2118"/>
<dbReference type="eggNOG" id="COG0283">
    <property type="taxonomic scope" value="Bacteria"/>
</dbReference>
<dbReference type="HOGENOM" id="CLU_079959_0_2_10"/>
<dbReference type="InParanoid" id="Q8A626"/>
<dbReference type="OrthoDB" id="9807434at2"/>
<dbReference type="Proteomes" id="UP000001414">
    <property type="component" value="Chromosome"/>
</dbReference>
<dbReference type="GO" id="GO:0005829">
    <property type="term" value="C:cytosol"/>
    <property type="evidence" value="ECO:0000318"/>
    <property type="project" value="GO_Central"/>
</dbReference>
<dbReference type="GO" id="GO:0004127">
    <property type="term" value="F:(d)CMP kinase activity"/>
    <property type="evidence" value="ECO:0000318"/>
    <property type="project" value="GO_Central"/>
</dbReference>
<dbReference type="GO" id="GO:0005524">
    <property type="term" value="F:ATP binding"/>
    <property type="evidence" value="ECO:0007669"/>
    <property type="project" value="UniProtKB-UniRule"/>
</dbReference>
<dbReference type="GO" id="GO:0036430">
    <property type="term" value="F:CMP kinase activity"/>
    <property type="evidence" value="ECO:0007669"/>
    <property type="project" value="RHEA"/>
</dbReference>
<dbReference type="GO" id="GO:0036431">
    <property type="term" value="F:dCMP kinase activity"/>
    <property type="evidence" value="ECO:0007669"/>
    <property type="project" value="RHEA"/>
</dbReference>
<dbReference type="GO" id="GO:0015949">
    <property type="term" value="P:nucleobase-containing small molecule interconversion"/>
    <property type="evidence" value="ECO:0000318"/>
    <property type="project" value="GO_Central"/>
</dbReference>
<dbReference type="GO" id="GO:0006220">
    <property type="term" value="P:pyrimidine nucleotide metabolic process"/>
    <property type="evidence" value="ECO:0007669"/>
    <property type="project" value="UniProtKB-UniRule"/>
</dbReference>
<dbReference type="CDD" id="cd02020">
    <property type="entry name" value="CMPK"/>
    <property type="match status" value="1"/>
</dbReference>
<dbReference type="Gene3D" id="3.40.50.300">
    <property type="entry name" value="P-loop containing nucleotide triphosphate hydrolases"/>
    <property type="match status" value="1"/>
</dbReference>
<dbReference type="HAMAP" id="MF_00238">
    <property type="entry name" value="Cytidyl_kinase_type1"/>
    <property type="match status" value="1"/>
</dbReference>
<dbReference type="InterPro" id="IPR003136">
    <property type="entry name" value="Cytidylate_kin"/>
</dbReference>
<dbReference type="InterPro" id="IPR011994">
    <property type="entry name" value="Cytidylate_kinase_dom"/>
</dbReference>
<dbReference type="InterPro" id="IPR027417">
    <property type="entry name" value="P-loop_NTPase"/>
</dbReference>
<dbReference type="NCBIfam" id="TIGR00017">
    <property type="entry name" value="cmk"/>
    <property type="match status" value="1"/>
</dbReference>
<dbReference type="PANTHER" id="PTHR21299:SF2">
    <property type="entry name" value="CYTIDYLATE KINASE"/>
    <property type="match status" value="1"/>
</dbReference>
<dbReference type="PANTHER" id="PTHR21299">
    <property type="entry name" value="CYTIDYLATE KINASE/PANTOATE-BETA-ALANINE LIGASE"/>
    <property type="match status" value="1"/>
</dbReference>
<dbReference type="Pfam" id="PF02224">
    <property type="entry name" value="Cytidylate_kin"/>
    <property type="match status" value="1"/>
</dbReference>
<dbReference type="SUPFAM" id="SSF52540">
    <property type="entry name" value="P-loop containing nucleoside triphosphate hydrolases"/>
    <property type="match status" value="1"/>
</dbReference>